<protein>
    <recommendedName>
        <fullName evidence="1">ATP-dependent protease ATPase subunit HslU</fullName>
    </recommendedName>
    <alternativeName>
        <fullName evidence="1">Unfoldase HslU</fullName>
    </alternativeName>
</protein>
<comment type="function">
    <text evidence="1">ATPase subunit of a proteasome-like degradation complex; this subunit has chaperone activity. The binding of ATP and its subsequent hydrolysis by HslU are essential for unfolding of protein substrates subsequently hydrolyzed by HslV. HslU recognizes the N-terminal part of its protein substrates and unfolds these before they are guided to HslV for hydrolysis.</text>
</comment>
<comment type="subunit">
    <text evidence="1">A double ring-shaped homohexamer of HslV is capped on each side by a ring-shaped HslU homohexamer. The assembly of the HslU/HslV complex is dependent on binding of ATP.</text>
</comment>
<comment type="subcellular location">
    <subcellularLocation>
        <location evidence="1">Cytoplasm</location>
    </subcellularLocation>
</comment>
<comment type="similarity">
    <text evidence="1">Belongs to the ClpX chaperone family. HslU subfamily.</text>
</comment>
<dbReference type="EMBL" id="CP000142">
    <property type="protein sequence ID" value="ABA89651.1"/>
    <property type="molecule type" value="Genomic_DNA"/>
</dbReference>
<dbReference type="RefSeq" id="WP_011342177.1">
    <property type="nucleotide sequence ID" value="NC_007498.2"/>
</dbReference>
<dbReference type="SMR" id="Q3A1V6"/>
<dbReference type="STRING" id="338963.Pcar_2412"/>
<dbReference type="KEGG" id="pca:Pcar_2412"/>
<dbReference type="eggNOG" id="COG1220">
    <property type="taxonomic scope" value="Bacteria"/>
</dbReference>
<dbReference type="HOGENOM" id="CLU_033123_0_0_7"/>
<dbReference type="OrthoDB" id="9804062at2"/>
<dbReference type="Proteomes" id="UP000002534">
    <property type="component" value="Chromosome"/>
</dbReference>
<dbReference type="GO" id="GO:0009376">
    <property type="term" value="C:HslUV protease complex"/>
    <property type="evidence" value="ECO:0007669"/>
    <property type="project" value="UniProtKB-UniRule"/>
</dbReference>
<dbReference type="GO" id="GO:0005524">
    <property type="term" value="F:ATP binding"/>
    <property type="evidence" value="ECO:0007669"/>
    <property type="project" value="UniProtKB-UniRule"/>
</dbReference>
<dbReference type="GO" id="GO:0016887">
    <property type="term" value="F:ATP hydrolysis activity"/>
    <property type="evidence" value="ECO:0007669"/>
    <property type="project" value="InterPro"/>
</dbReference>
<dbReference type="GO" id="GO:0008233">
    <property type="term" value="F:peptidase activity"/>
    <property type="evidence" value="ECO:0007669"/>
    <property type="project" value="InterPro"/>
</dbReference>
<dbReference type="GO" id="GO:0036402">
    <property type="term" value="F:proteasome-activating activity"/>
    <property type="evidence" value="ECO:0007669"/>
    <property type="project" value="UniProtKB-UniRule"/>
</dbReference>
<dbReference type="GO" id="GO:0043335">
    <property type="term" value="P:protein unfolding"/>
    <property type="evidence" value="ECO:0007669"/>
    <property type="project" value="UniProtKB-UniRule"/>
</dbReference>
<dbReference type="GO" id="GO:0051603">
    <property type="term" value="P:proteolysis involved in protein catabolic process"/>
    <property type="evidence" value="ECO:0007669"/>
    <property type="project" value="TreeGrafter"/>
</dbReference>
<dbReference type="CDD" id="cd19498">
    <property type="entry name" value="RecA-like_HslU"/>
    <property type="match status" value="1"/>
</dbReference>
<dbReference type="FunFam" id="3.40.50.300:FF:000213">
    <property type="entry name" value="ATP-dependent protease ATPase subunit HslU"/>
    <property type="match status" value="1"/>
</dbReference>
<dbReference type="FunFam" id="3.40.50.300:FF:000220">
    <property type="entry name" value="ATP-dependent protease ATPase subunit HslU"/>
    <property type="match status" value="1"/>
</dbReference>
<dbReference type="Gene3D" id="1.10.8.60">
    <property type="match status" value="1"/>
</dbReference>
<dbReference type="Gene3D" id="1.10.8.10">
    <property type="entry name" value="DNA helicase RuvA subunit, C-terminal domain"/>
    <property type="match status" value="1"/>
</dbReference>
<dbReference type="Gene3D" id="3.40.50.300">
    <property type="entry name" value="P-loop containing nucleotide triphosphate hydrolases"/>
    <property type="match status" value="2"/>
</dbReference>
<dbReference type="HAMAP" id="MF_00249">
    <property type="entry name" value="HslU"/>
    <property type="match status" value="1"/>
</dbReference>
<dbReference type="InterPro" id="IPR003593">
    <property type="entry name" value="AAA+_ATPase"/>
</dbReference>
<dbReference type="InterPro" id="IPR050052">
    <property type="entry name" value="ATP-dep_Clp_protease_ClpX"/>
</dbReference>
<dbReference type="InterPro" id="IPR003959">
    <property type="entry name" value="ATPase_AAA_core"/>
</dbReference>
<dbReference type="InterPro" id="IPR019489">
    <property type="entry name" value="Clp_ATPase_C"/>
</dbReference>
<dbReference type="InterPro" id="IPR004491">
    <property type="entry name" value="HslU"/>
</dbReference>
<dbReference type="InterPro" id="IPR027417">
    <property type="entry name" value="P-loop_NTPase"/>
</dbReference>
<dbReference type="NCBIfam" id="TIGR00390">
    <property type="entry name" value="hslU"/>
    <property type="match status" value="1"/>
</dbReference>
<dbReference type="NCBIfam" id="NF003544">
    <property type="entry name" value="PRK05201.1"/>
    <property type="match status" value="1"/>
</dbReference>
<dbReference type="PANTHER" id="PTHR48102">
    <property type="entry name" value="ATP-DEPENDENT CLP PROTEASE ATP-BINDING SUBUNIT CLPX-LIKE, MITOCHONDRIAL-RELATED"/>
    <property type="match status" value="1"/>
</dbReference>
<dbReference type="PANTHER" id="PTHR48102:SF3">
    <property type="entry name" value="ATP-DEPENDENT PROTEASE ATPASE SUBUNIT HSLU"/>
    <property type="match status" value="1"/>
</dbReference>
<dbReference type="Pfam" id="PF00004">
    <property type="entry name" value="AAA"/>
    <property type="match status" value="1"/>
</dbReference>
<dbReference type="Pfam" id="PF07724">
    <property type="entry name" value="AAA_2"/>
    <property type="match status" value="1"/>
</dbReference>
<dbReference type="SMART" id="SM00382">
    <property type="entry name" value="AAA"/>
    <property type="match status" value="1"/>
</dbReference>
<dbReference type="SMART" id="SM01086">
    <property type="entry name" value="ClpB_D2-small"/>
    <property type="match status" value="1"/>
</dbReference>
<dbReference type="SUPFAM" id="SSF52540">
    <property type="entry name" value="P-loop containing nucleoside triphosphate hydrolases"/>
    <property type="match status" value="1"/>
</dbReference>
<accession>Q3A1V6</accession>
<feature type="chain" id="PRO_1000012768" description="ATP-dependent protease ATPase subunit HslU">
    <location>
        <begin position="1"/>
        <end position="445"/>
    </location>
</feature>
<feature type="binding site" evidence="1">
    <location>
        <position position="18"/>
    </location>
    <ligand>
        <name>ATP</name>
        <dbReference type="ChEBI" id="CHEBI:30616"/>
    </ligand>
</feature>
<feature type="binding site" evidence="1">
    <location>
        <begin position="60"/>
        <end position="65"/>
    </location>
    <ligand>
        <name>ATP</name>
        <dbReference type="ChEBI" id="CHEBI:30616"/>
    </ligand>
</feature>
<feature type="binding site" evidence="1">
    <location>
        <position position="258"/>
    </location>
    <ligand>
        <name>ATP</name>
        <dbReference type="ChEBI" id="CHEBI:30616"/>
    </ligand>
</feature>
<feature type="binding site" evidence="1">
    <location>
        <position position="323"/>
    </location>
    <ligand>
        <name>ATP</name>
        <dbReference type="ChEBI" id="CHEBI:30616"/>
    </ligand>
</feature>
<feature type="binding site" evidence="1">
    <location>
        <position position="395"/>
    </location>
    <ligand>
        <name>ATP</name>
        <dbReference type="ChEBI" id="CHEBI:30616"/>
    </ligand>
</feature>
<keyword id="KW-0067">ATP-binding</keyword>
<keyword id="KW-0143">Chaperone</keyword>
<keyword id="KW-0963">Cytoplasm</keyword>
<keyword id="KW-0547">Nucleotide-binding</keyword>
<keyword id="KW-1185">Reference proteome</keyword>
<keyword id="KW-0346">Stress response</keyword>
<organism>
    <name type="scientific">Syntrophotalea carbinolica (strain DSM 2380 / NBRC 103641 / GraBd1)</name>
    <name type="common">Pelobacter carbinolicus</name>
    <dbReference type="NCBI Taxonomy" id="338963"/>
    <lineage>
        <taxon>Bacteria</taxon>
        <taxon>Pseudomonadati</taxon>
        <taxon>Thermodesulfobacteriota</taxon>
        <taxon>Desulfuromonadia</taxon>
        <taxon>Desulfuromonadales</taxon>
        <taxon>Syntrophotaleaceae</taxon>
        <taxon>Syntrophotalea</taxon>
    </lineage>
</organism>
<sequence>MTNFTPREIVSELDRYIIGQKQAKRAVAVALRNRWRRQQVADELRDEIAPKNIIMIGPTGVGKTEIARRLARLAQAPFIKVEASKFTEVGYVGRDVESMVRDLLDLAIIMIREEEARKVRVKAEDLAEERLLDLLLPGAQSRDPDLSGEEAGEGGTRDKLRKLLRKGALDERKVELEVQAAQMPMMEVFTPQGTEEMGINFKEMFGNLFPKKTKRRQIKVSEAREILIEQEAERLVDMEKVNTLARERVEQSGIIFIDEIDKIAGQNGRQGPDVSREGVQRDILPIVEGSTVSTKYGPVKTDHILFVAAGAFHVAKPSDLIPELQGRFPIRVELTSLGEEEFFRILTEPKNALIRQYEALMETEGIRLHFTEEAIREIARIATQVNSQTENIGARRLHTIMEKLLEELSFEAPEHREQSVEIDVDYVRKQLSDIARDEDLSRYIL</sequence>
<reference key="1">
    <citation type="submission" date="2005-10" db="EMBL/GenBank/DDBJ databases">
        <title>Complete sequence of Pelobacter carbinolicus DSM 2380.</title>
        <authorList>
            <person name="Copeland A."/>
            <person name="Lucas S."/>
            <person name="Lapidus A."/>
            <person name="Barry K."/>
            <person name="Detter J.C."/>
            <person name="Glavina T."/>
            <person name="Hammon N."/>
            <person name="Israni S."/>
            <person name="Pitluck S."/>
            <person name="Chertkov O."/>
            <person name="Schmutz J."/>
            <person name="Larimer F."/>
            <person name="Land M."/>
            <person name="Kyrpides N."/>
            <person name="Ivanova N."/>
            <person name="Richardson P."/>
        </authorList>
    </citation>
    <scope>NUCLEOTIDE SEQUENCE [LARGE SCALE GENOMIC DNA]</scope>
    <source>
        <strain>DSM 2380 / NBRC 103641 / GraBd1</strain>
    </source>
</reference>
<evidence type="ECO:0000255" key="1">
    <source>
        <dbReference type="HAMAP-Rule" id="MF_00249"/>
    </source>
</evidence>
<gene>
    <name evidence="1" type="primary">hslU</name>
    <name type="ordered locus">Pcar_2412</name>
</gene>
<proteinExistence type="inferred from homology"/>
<name>HSLU_SYNC1</name>